<gene>
    <name evidence="1" type="primary">codY</name>
    <name type="ordered locus">BCAH187_A3875</name>
</gene>
<sequence>MELLAKTRKLNALLQSAAGKPVNFREMSDTMCEVIEANVFVVSRRGKLLGYAIHQQIENERMKQMLAERQFPEEYTQSLFNITETSSNLDVNSAYTAFPVENKELFGQGLTTIVPIVGGGERLGTLVLARLGQEFLDDDLILAEYSSTVVGMEILREKAEEIEEEARSKAVVQMAISSLSYSELEAIEHIFEELNGTEGLLVASKIADRVGITRSVIVNALRKLESAGVIESRSLGMKGTYIKVLNDKFLHELAKLKTN</sequence>
<reference key="1">
    <citation type="submission" date="2008-10" db="EMBL/GenBank/DDBJ databases">
        <title>Genome sequence of Bacillus cereus AH187.</title>
        <authorList>
            <person name="Dodson R.J."/>
            <person name="Durkin A.S."/>
            <person name="Rosovitz M.J."/>
            <person name="Rasko D.A."/>
            <person name="Kolsto A.B."/>
            <person name="Okstad O.A."/>
            <person name="Ravel J."/>
            <person name="Sutton G."/>
        </authorList>
    </citation>
    <scope>NUCLEOTIDE SEQUENCE [LARGE SCALE GENOMIC DNA]</scope>
    <source>
        <strain>AH187</strain>
    </source>
</reference>
<feature type="chain" id="PRO_1000130449" description="Global transcriptional regulator CodY">
    <location>
        <begin position="1"/>
        <end position="259"/>
    </location>
</feature>
<feature type="DNA-binding region" description="H-T-H motif" evidence="1">
    <location>
        <begin position="203"/>
        <end position="222"/>
    </location>
</feature>
<feature type="region of interest" description="GAF domain" evidence="1">
    <location>
        <begin position="1"/>
        <end position="155"/>
    </location>
</feature>
<feature type="modified residue" description="Phosphoserine" evidence="1">
    <location>
        <position position="215"/>
    </location>
</feature>
<evidence type="ECO:0000255" key="1">
    <source>
        <dbReference type="HAMAP-Rule" id="MF_00621"/>
    </source>
</evidence>
<organism>
    <name type="scientific">Bacillus cereus (strain AH187)</name>
    <dbReference type="NCBI Taxonomy" id="405534"/>
    <lineage>
        <taxon>Bacteria</taxon>
        <taxon>Bacillati</taxon>
        <taxon>Bacillota</taxon>
        <taxon>Bacilli</taxon>
        <taxon>Bacillales</taxon>
        <taxon>Bacillaceae</taxon>
        <taxon>Bacillus</taxon>
        <taxon>Bacillus cereus group</taxon>
    </lineage>
</organism>
<protein>
    <recommendedName>
        <fullName evidence="1">Global transcriptional regulator CodY</fullName>
    </recommendedName>
</protein>
<keyword id="KW-0963">Cytoplasm</keyword>
<keyword id="KW-0238">DNA-binding</keyword>
<keyword id="KW-0597">Phosphoprotein</keyword>
<keyword id="KW-0678">Repressor</keyword>
<keyword id="KW-0804">Transcription</keyword>
<keyword id="KW-0805">Transcription regulation</keyword>
<accession>B7HLG1</accession>
<name>CODY_BACC7</name>
<proteinExistence type="inferred from homology"/>
<comment type="function">
    <text evidence="1">DNA-binding global transcriptional regulator which is involved in the adaptive response to starvation and acts by directly or indirectly controlling the expression of numerous genes in response to nutrient availability. During rapid exponential growth, CodY is highly active and represses genes whose products allow adaptation to nutrient depletion.</text>
</comment>
<comment type="subcellular location">
    <subcellularLocation>
        <location evidence="1">Cytoplasm</location>
    </subcellularLocation>
</comment>
<comment type="similarity">
    <text evidence="1">Belongs to the CodY family.</text>
</comment>
<dbReference type="EMBL" id="CP001177">
    <property type="protein sequence ID" value="ACJ80679.1"/>
    <property type="molecule type" value="Genomic_DNA"/>
</dbReference>
<dbReference type="SMR" id="B7HLG1"/>
<dbReference type="KEGG" id="bcr:BCAH187_A3875"/>
<dbReference type="HOGENOM" id="CLU_089581_0_0_9"/>
<dbReference type="PHI-base" id="PHI:2982"/>
<dbReference type="Proteomes" id="UP000002214">
    <property type="component" value="Chromosome"/>
</dbReference>
<dbReference type="GO" id="GO:0005737">
    <property type="term" value="C:cytoplasm"/>
    <property type="evidence" value="ECO:0007669"/>
    <property type="project" value="UniProtKB-SubCell"/>
</dbReference>
<dbReference type="GO" id="GO:0003677">
    <property type="term" value="F:DNA binding"/>
    <property type="evidence" value="ECO:0007669"/>
    <property type="project" value="UniProtKB-UniRule"/>
</dbReference>
<dbReference type="GO" id="GO:0003700">
    <property type="term" value="F:DNA-binding transcription factor activity"/>
    <property type="evidence" value="ECO:0007669"/>
    <property type="project" value="InterPro"/>
</dbReference>
<dbReference type="GO" id="GO:0005525">
    <property type="term" value="F:GTP binding"/>
    <property type="evidence" value="ECO:0007669"/>
    <property type="project" value="InterPro"/>
</dbReference>
<dbReference type="GO" id="GO:0045892">
    <property type="term" value="P:negative regulation of DNA-templated transcription"/>
    <property type="evidence" value="ECO:0007669"/>
    <property type="project" value="UniProtKB-UniRule"/>
</dbReference>
<dbReference type="FunFam" id="1.10.10.10:FF:000034">
    <property type="entry name" value="GTP-sensing transcriptional pleiotropic repressor CodY"/>
    <property type="match status" value="1"/>
</dbReference>
<dbReference type="FunFam" id="3.30.450.40:FF:000003">
    <property type="entry name" value="GTP-sensing transcriptional pleiotropic repressor CodY"/>
    <property type="match status" value="1"/>
</dbReference>
<dbReference type="Gene3D" id="3.30.450.40">
    <property type="match status" value="1"/>
</dbReference>
<dbReference type="Gene3D" id="1.10.10.10">
    <property type="entry name" value="Winged helix-like DNA-binding domain superfamily/Winged helix DNA-binding domain"/>
    <property type="match status" value="1"/>
</dbReference>
<dbReference type="HAMAP" id="MF_00621">
    <property type="entry name" value="HTH_type_CodY"/>
    <property type="match status" value="1"/>
</dbReference>
<dbReference type="InterPro" id="IPR014154">
    <property type="entry name" value="CodY"/>
</dbReference>
<dbReference type="InterPro" id="IPR029016">
    <property type="entry name" value="GAF-like_dom_sf"/>
</dbReference>
<dbReference type="InterPro" id="IPR013198">
    <property type="entry name" value="GTP_trans_reg_CodY_C"/>
</dbReference>
<dbReference type="InterPro" id="IPR010312">
    <property type="entry name" value="Transc_reg_CodY_N"/>
</dbReference>
<dbReference type="InterPro" id="IPR036388">
    <property type="entry name" value="WH-like_DNA-bd_sf"/>
</dbReference>
<dbReference type="InterPro" id="IPR036390">
    <property type="entry name" value="WH_DNA-bd_sf"/>
</dbReference>
<dbReference type="NCBIfam" id="TIGR02787">
    <property type="entry name" value="codY_Gpos"/>
    <property type="match status" value="1"/>
</dbReference>
<dbReference type="NCBIfam" id="NF003170">
    <property type="entry name" value="PRK04158.1"/>
    <property type="match status" value="1"/>
</dbReference>
<dbReference type="PANTHER" id="PTHR40062:SF1">
    <property type="entry name" value="GLOBAL TRANSCRIPTIONAL REGULATOR CODY"/>
    <property type="match status" value="1"/>
</dbReference>
<dbReference type="PANTHER" id="PTHR40062">
    <property type="entry name" value="GTP-SENSING TRANSCRIPTIONAL PLEIOTROPIC REPRESSOR CODY"/>
    <property type="match status" value="1"/>
</dbReference>
<dbReference type="Pfam" id="PF06018">
    <property type="entry name" value="CodY"/>
    <property type="match status" value="1"/>
</dbReference>
<dbReference type="Pfam" id="PF08222">
    <property type="entry name" value="HTH_CodY"/>
    <property type="match status" value="1"/>
</dbReference>
<dbReference type="PIRSF" id="PIRSF011572">
    <property type="entry name" value="GTP_sensing_CodY"/>
    <property type="match status" value="1"/>
</dbReference>
<dbReference type="SUPFAM" id="SSF46785">
    <property type="entry name" value="Winged helix' DNA-binding domain"/>
    <property type="match status" value="1"/>
</dbReference>